<feature type="chain" id="PRO_1000006955" description="Large ribosomal subunit protein bL12">
    <location>
        <begin position="1"/>
        <end position="125"/>
    </location>
</feature>
<dbReference type="EMBL" id="CP000453">
    <property type="protein sequence ID" value="ABI55804.1"/>
    <property type="molecule type" value="Genomic_DNA"/>
</dbReference>
<dbReference type="RefSeq" id="WP_011628200.1">
    <property type="nucleotide sequence ID" value="NC_008340.1"/>
</dbReference>
<dbReference type="SMR" id="Q0ABI3"/>
<dbReference type="KEGG" id="aeh:Mlg_0450"/>
<dbReference type="eggNOG" id="COG0222">
    <property type="taxonomic scope" value="Bacteria"/>
</dbReference>
<dbReference type="HOGENOM" id="CLU_086499_3_2_6"/>
<dbReference type="OrthoDB" id="9811748at2"/>
<dbReference type="Proteomes" id="UP000001962">
    <property type="component" value="Chromosome"/>
</dbReference>
<dbReference type="GO" id="GO:0022625">
    <property type="term" value="C:cytosolic large ribosomal subunit"/>
    <property type="evidence" value="ECO:0007669"/>
    <property type="project" value="TreeGrafter"/>
</dbReference>
<dbReference type="GO" id="GO:0003729">
    <property type="term" value="F:mRNA binding"/>
    <property type="evidence" value="ECO:0007669"/>
    <property type="project" value="TreeGrafter"/>
</dbReference>
<dbReference type="GO" id="GO:0003735">
    <property type="term" value="F:structural constituent of ribosome"/>
    <property type="evidence" value="ECO:0007669"/>
    <property type="project" value="InterPro"/>
</dbReference>
<dbReference type="GO" id="GO:0006412">
    <property type="term" value="P:translation"/>
    <property type="evidence" value="ECO:0007669"/>
    <property type="project" value="UniProtKB-UniRule"/>
</dbReference>
<dbReference type="CDD" id="cd00387">
    <property type="entry name" value="Ribosomal_L7_L12"/>
    <property type="match status" value="1"/>
</dbReference>
<dbReference type="FunFam" id="3.30.1390.10:FF:000001">
    <property type="entry name" value="50S ribosomal protein L7/L12"/>
    <property type="match status" value="1"/>
</dbReference>
<dbReference type="Gene3D" id="3.30.1390.10">
    <property type="match status" value="1"/>
</dbReference>
<dbReference type="Gene3D" id="1.20.5.710">
    <property type="entry name" value="Single helix bin"/>
    <property type="match status" value="1"/>
</dbReference>
<dbReference type="HAMAP" id="MF_00368">
    <property type="entry name" value="Ribosomal_bL12"/>
    <property type="match status" value="1"/>
</dbReference>
<dbReference type="InterPro" id="IPR000206">
    <property type="entry name" value="Ribosomal_bL12"/>
</dbReference>
<dbReference type="InterPro" id="IPR013823">
    <property type="entry name" value="Ribosomal_bL12_C"/>
</dbReference>
<dbReference type="InterPro" id="IPR014719">
    <property type="entry name" value="Ribosomal_bL12_C/ClpS-like"/>
</dbReference>
<dbReference type="InterPro" id="IPR008932">
    <property type="entry name" value="Ribosomal_bL12_oligo"/>
</dbReference>
<dbReference type="InterPro" id="IPR036235">
    <property type="entry name" value="Ribosomal_bL12_oligo_N_sf"/>
</dbReference>
<dbReference type="NCBIfam" id="TIGR00855">
    <property type="entry name" value="L12"/>
    <property type="match status" value="1"/>
</dbReference>
<dbReference type="PANTHER" id="PTHR45987">
    <property type="entry name" value="39S RIBOSOMAL PROTEIN L12"/>
    <property type="match status" value="1"/>
</dbReference>
<dbReference type="PANTHER" id="PTHR45987:SF4">
    <property type="entry name" value="LARGE RIBOSOMAL SUBUNIT PROTEIN BL12M"/>
    <property type="match status" value="1"/>
</dbReference>
<dbReference type="Pfam" id="PF00542">
    <property type="entry name" value="Ribosomal_L12"/>
    <property type="match status" value="1"/>
</dbReference>
<dbReference type="Pfam" id="PF16320">
    <property type="entry name" value="Ribosomal_L12_N"/>
    <property type="match status" value="1"/>
</dbReference>
<dbReference type="SUPFAM" id="SSF54736">
    <property type="entry name" value="ClpS-like"/>
    <property type="match status" value="1"/>
</dbReference>
<dbReference type="SUPFAM" id="SSF48300">
    <property type="entry name" value="Ribosomal protein L7/12, oligomerisation (N-terminal) domain"/>
    <property type="match status" value="1"/>
</dbReference>
<gene>
    <name evidence="1" type="primary">rplL</name>
    <name type="ordered locus">Mlg_0450</name>
</gene>
<accession>Q0ABI3</accession>
<protein>
    <recommendedName>
        <fullName evidence="1">Large ribosomal subunit protein bL12</fullName>
    </recommendedName>
    <alternativeName>
        <fullName evidence="2">50S ribosomal protein L7/L12</fullName>
    </alternativeName>
</protein>
<evidence type="ECO:0000255" key="1">
    <source>
        <dbReference type="HAMAP-Rule" id="MF_00368"/>
    </source>
</evidence>
<evidence type="ECO:0000305" key="2"/>
<sequence>MAVSKEEILETISNMTVMEVVELIEEMEEKFGVTAAAAVAAAPAAAGGEAEAAEEQTEFDVVLSSFGSNKVAVIKAVRGITGLGLKEAKEVVEGAPSPIKEGASKEEAEEIKAKLEEAGASVEVK</sequence>
<comment type="function">
    <text evidence="1">Forms part of the ribosomal stalk which helps the ribosome interact with GTP-bound translation factors. Is thus essential for accurate translation.</text>
</comment>
<comment type="subunit">
    <text evidence="1">Homodimer. Part of the ribosomal stalk of the 50S ribosomal subunit. Forms a multimeric L10(L12)X complex, where L10 forms an elongated spine to which 2 to 4 L12 dimers bind in a sequential fashion. Binds GTP-bound translation factors.</text>
</comment>
<comment type="similarity">
    <text evidence="1">Belongs to the bacterial ribosomal protein bL12 family.</text>
</comment>
<organism>
    <name type="scientific">Alkalilimnicola ehrlichii (strain ATCC BAA-1101 / DSM 17681 / MLHE-1)</name>
    <dbReference type="NCBI Taxonomy" id="187272"/>
    <lineage>
        <taxon>Bacteria</taxon>
        <taxon>Pseudomonadati</taxon>
        <taxon>Pseudomonadota</taxon>
        <taxon>Gammaproteobacteria</taxon>
        <taxon>Chromatiales</taxon>
        <taxon>Ectothiorhodospiraceae</taxon>
        <taxon>Alkalilimnicola</taxon>
    </lineage>
</organism>
<name>RL7_ALKEH</name>
<reference key="1">
    <citation type="submission" date="2006-08" db="EMBL/GenBank/DDBJ databases">
        <title>Complete sequence of Alkalilimnicola ehrilichei MLHE-1.</title>
        <authorList>
            <person name="Copeland A."/>
            <person name="Lucas S."/>
            <person name="Lapidus A."/>
            <person name="Barry K."/>
            <person name="Detter J.C."/>
            <person name="Glavina del Rio T."/>
            <person name="Hammon N."/>
            <person name="Israni S."/>
            <person name="Dalin E."/>
            <person name="Tice H."/>
            <person name="Pitluck S."/>
            <person name="Sims D."/>
            <person name="Brettin T."/>
            <person name="Bruce D."/>
            <person name="Han C."/>
            <person name="Tapia R."/>
            <person name="Gilna P."/>
            <person name="Schmutz J."/>
            <person name="Larimer F."/>
            <person name="Land M."/>
            <person name="Hauser L."/>
            <person name="Kyrpides N."/>
            <person name="Mikhailova N."/>
            <person name="Oremland R.S."/>
            <person name="Hoeft S.E."/>
            <person name="Switzer-Blum J."/>
            <person name="Kulp T."/>
            <person name="King G."/>
            <person name="Tabita R."/>
            <person name="Witte B."/>
            <person name="Santini J.M."/>
            <person name="Basu P."/>
            <person name="Hollibaugh J.T."/>
            <person name="Xie G."/>
            <person name="Stolz J.F."/>
            <person name="Richardson P."/>
        </authorList>
    </citation>
    <scope>NUCLEOTIDE SEQUENCE [LARGE SCALE GENOMIC DNA]</scope>
    <source>
        <strain>ATCC BAA-1101 / DSM 17681 / MLHE-1</strain>
    </source>
</reference>
<keyword id="KW-1185">Reference proteome</keyword>
<keyword id="KW-0687">Ribonucleoprotein</keyword>
<keyword id="KW-0689">Ribosomal protein</keyword>
<proteinExistence type="inferred from homology"/>